<evidence type="ECO:0000255" key="1">
    <source>
        <dbReference type="HAMAP-Rule" id="MF_00387"/>
    </source>
</evidence>
<feature type="chain" id="PRO_1000122699" description="Acyl-[acyl-carrier-protein]--UDP-N-acetylglucosamine O-acyltransferase">
    <location>
        <begin position="1"/>
        <end position="276"/>
    </location>
</feature>
<organism>
    <name type="scientific">Rippkaea orientalis (strain PCC 8801 / RF-1)</name>
    <name type="common">Cyanothece sp. (strain PCC 8801)</name>
    <dbReference type="NCBI Taxonomy" id="41431"/>
    <lineage>
        <taxon>Bacteria</taxon>
        <taxon>Bacillati</taxon>
        <taxon>Cyanobacteriota</taxon>
        <taxon>Cyanophyceae</taxon>
        <taxon>Oscillatoriophycideae</taxon>
        <taxon>Chroococcales</taxon>
        <taxon>Aphanothecaceae</taxon>
        <taxon>Rippkaea</taxon>
        <taxon>Rippkaea orientalis</taxon>
    </lineage>
</organism>
<proteinExistence type="inferred from homology"/>
<keyword id="KW-0012">Acyltransferase</keyword>
<keyword id="KW-0963">Cytoplasm</keyword>
<keyword id="KW-0441">Lipid A biosynthesis</keyword>
<keyword id="KW-0444">Lipid biosynthesis</keyword>
<keyword id="KW-0443">Lipid metabolism</keyword>
<keyword id="KW-1185">Reference proteome</keyword>
<keyword id="KW-0677">Repeat</keyword>
<keyword id="KW-0808">Transferase</keyword>
<comment type="function">
    <text evidence="1">Involved in the biosynthesis of lipid A, a phosphorylated glycolipid that anchors the lipopolysaccharide to the outer membrane of the cell.</text>
</comment>
<comment type="catalytic activity">
    <reaction evidence="1">
        <text>a (3R)-hydroxyacyl-[ACP] + UDP-N-acetyl-alpha-D-glucosamine = a UDP-3-O-[(3R)-3-hydroxyacyl]-N-acetyl-alpha-D-glucosamine + holo-[ACP]</text>
        <dbReference type="Rhea" id="RHEA:67812"/>
        <dbReference type="Rhea" id="RHEA-COMP:9685"/>
        <dbReference type="Rhea" id="RHEA-COMP:9945"/>
        <dbReference type="ChEBI" id="CHEBI:57705"/>
        <dbReference type="ChEBI" id="CHEBI:64479"/>
        <dbReference type="ChEBI" id="CHEBI:78827"/>
        <dbReference type="ChEBI" id="CHEBI:173225"/>
        <dbReference type="EC" id="2.3.1.129"/>
    </reaction>
</comment>
<comment type="pathway">
    <text evidence="1">Glycolipid biosynthesis; lipid IV(A) biosynthesis; lipid IV(A) from (3R)-3-hydroxytetradecanoyl-[acyl-carrier-protein] and UDP-N-acetyl-alpha-D-glucosamine: step 1/6.</text>
</comment>
<comment type="subunit">
    <text evidence="1">Homotrimer.</text>
</comment>
<comment type="subcellular location">
    <subcellularLocation>
        <location evidence="1">Cytoplasm</location>
    </subcellularLocation>
</comment>
<comment type="similarity">
    <text evidence="1">Belongs to the transferase hexapeptide repeat family. LpxA subfamily.</text>
</comment>
<sequence>MLTDQSKRDALLNTHIHPTAVIHPKAELHPTVTVGPYAVIGENVKIGAQTTIGAHAVIEGPIEIGIGNRIFPSAVIGLEPQDLKYKGAASWVKIGDYNTIREFVTINRATHADEVTEIGSHNLLMAYVHVAHNCVIEDHVIIANAVALAGHVHIESRAVIGGALGVHQFVRIGRNAMLGGMSRIDRDAPPYMAVEGNPSRVRALNLIGLKRAGLTAEDLSSLKKAFRLLYRSQLTFKEALEELQALSNNQYVEYLYQFLQASTTGEKRRGPIPGKN</sequence>
<accession>B7JW27</accession>
<name>LPXA_RIPO1</name>
<dbReference type="EC" id="2.3.1.129" evidence="1"/>
<dbReference type="EMBL" id="CP001287">
    <property type="protein sequence ID" value="ACK65716.1"/>
    <property type="molecule type" value="Genomic_DNA"/>
</dbReference>
<dbReference type="RefSeq" id="WP_012594989.1">
    <property type="nucleotide sequence ID" value="NC_011726.1"/>
</dbReference>
<dbReference type="SMR" id="B7JW27"/>
<dbReference type="STRING" id="41431.PCC8801_1665"/>
<dbReference type="KEGG" id="cyp:PCC8801_1665"/>
<dbReference type="eggNOG" id="COG1043">
    <property type="taxonomic scope" value="Bacteria"/>
</dbReference>
<dbReference type="HOGENOM" id="CLU_061249_0_0_3"/>
<dbReference type="OrthoDB" id="9807278at2"/>
<dbReference type="UniPathway" id="UPA00359">
    <property type="reaction ID" value="UER00477"/>
</dbReference>
<dbReference type="Proteomes" id="UP000008204">
    <property type="component" value="Chromosome"/>
</dbReference>
<dbReference type="GO" id="GO:0031470">
    <property type="term" value="C:carboxysome"/>
    <property type="evidence" value="ECO:0007669"/>
    <property type="project" value="UniProtKB-ARBA"/>
</dbReference>
<dbReference type="GO" id="GO:0005737">
    <property type="term" value="C:cytoplasm"/>
    <property type="evidence" value="ECO:0007669"/>
    <property type="project" value="UniProtKB-SubCell"/>
</dbReference>
<dbReference type="GO" id="GO:0016020">
    <property type="term" value="C:membrane"/>
    <property type="evidence" value="ECO:0007669"/>
    <property type="project" value="GOC"/>
</dbReference>
<dbReference type="GO" id="GO:0008780">
    <property type="term" value="F:acyl-[acyl-carrier-protein]-UDP-N-acetylglucosamine O-acyltransferase activity"/>
    <property type="evidence" value="ECO:0007669"/>
    <property type="project" value="UniProtKB-UniRule"/>
</dbReference>
<dbReference type="GO" id="GO:0043886">
    <property type="term" value="F:structural constituent of carboxysome shell"/>
    <property type="evidence" value="ECO:0007669"/>
    <property type="project" value="UniProtKB-ARBA"/>
</dbReference>
<dbReference type="GO" id="GO:0009245">
    <property type="term" value="P:lipid A biosynthetic process"/>
    <property type="evidence" value="ECO:0007669"/>
    <property type="project" value="UniProtKB-UniRule"/>
</dbReference>
<dbReference type="CDD" id="cd03351">
    <property type="entry name" value="LbH_UDP-GlcNAc_AT"/>
    <property type="match status" value="1"/>
</dbReference>
<dbReference type="Gene3D" id="2.160.10.10">
    <property type="entry name" value="Hexapeptide repeat proteins"/>
    <property type="match status" value="1"/>
</dbReference>
<dbReference type="Gene3D" id="1.20.1180.10">
    <property type="entry name" value="Udp N-acetylglucosamine O-acyltransferase, C-terminal domain"/>
    <property type="match status" value="1"/>
</dbReference>
<dbReference type="HAMAP" id="MF_00387">
    <property type="entry name" value="LpxA"/>
    <property type="match status" value="1"/>
</dbReference>
<dbReference type="InterPro" id="IPR029098">
    <property type="entry name" value="Acetyltransf_C"/>
</dbReference>
<dbReference type="InterPro" id="IPR037157">
    <property type="entry name" value="Acetyltransf_C_sf"/>
</dbReference>
<dbReference type="InterPro" id="IPR001451">
    <property type="entry name" value="Hexapep"/>
</dbReference>
<dbReference type="InterPro" id="IPR018357">
    <property type="entry name" value="Hexapep_transf_CS"/>
</dbReference>
<dbReference type="InterPro" id="IPR010137">
    <property type="entry name" value="Lipid_A_LpxA"/>
</dbReference>
<dbReference type="InterPro" id="IPR011004">
    <property type="entry name" value="Trimer_LpxA-like_sf"/>
</dbReference>
<dbReference type="NCBIfam" id="TIGR01852">
    <property type="entry name" value="lipid_A_lpxA"/>
    <property type="match status" value="1"/>
</dbReference>
<dbReference type="NCBIfam" id="NF003657">
    <property type="entry name" value="PRK05289.1"/>
    <property type="match status" value="1"/>
</dbReference>
<dbReference type="PANTHER" id="PTHR43480">
    <property type="entry name" value="ACYL-[ACYL-CARRIER-PROTEIN]--UDP-N-ACETYLGLUCOSAMINE O-ACYLTRANSFERASE"/>
    <property type="match status" value="1"/>
</dbReference>
<dbReference type="PANTHER" id="PTHR43480:SF1">
    <property type="entry name" value="ACYL-[ACYL-CARRIER-PROTEIN]--UDP-N-ACETYLGLUCOSAMINE O-ACYLTRANSFERASE, MITOCHONDRIAL-RELATED"/>
    <property type="match status" value="1"/>
</dbReference>
<dbReference type="Pfam" id="PF13720">
    <property type="entry name" value="Acetyltransf_11"/>
    <property type="match status" value="1"/>
</dbReference>
<dbReference type="Pfam" id="PF00132">
    <property type="entry name" value="Hexapep"/>
    <property type="match status" value="2"/>
</dbReference>
<dbReference type="PIRSF" id="PIRSF000456">
    <property type="entry name" value="UDP-GlcNAc_acltr"/>
    <property type="match status" value="1"/>
</dbReference>
<dbReference type="SUPFAM" id="SSF51161">
    <property type="entry name" value="Trimeric LpxA-like enzymes"/>
    <property type="match status" value="1"/>
</dbReference>
<dbReference type="PROSITE" id="PS00101">
    <property type="entry name" value="HEXAPEP_TRANSFERASES"/>
    <property type="match status" value="2"/>
</dbReference>
<protein>
    <recommendedName>
        <fullName evidence="1">Acyl-[acyl-carrier-protein]--UDP-N-acetylglucosamine O-acyltransferase</fullName>
        <shortName evidence="1">UDP-N-acetylglucosamine acyltransferase</shortName>
        <ecNumber evidence="1">2.3.1.129</ecNumber>
    </recommendedName>
</protein>
<gene>
    <name evidence="1" type="primary">lpxA</name>
    <name type="ordered locus">PCC8801_1665</name>
</gene>
<reference key="1">
    <citation type="journal article" date="2011" name="MBio">
        <title>Novel metabolic attributes of the genus Cyanothece, comprising a group of unicellular nitrogen-fixing Cyanobacteria.</title>
        <authorList>
            <person name="Bandyopadhyay A."/>
            <person name="Elvitigala T."/>
            <person name="Welsh E."/>
            <person name="Stockel J."/>
            <person name="Liberton M."/>
            <person name="Min H."/>
            <person name="Sherman L.A."/>
            <person name="Pakrasi H.B."/>
        </authorList>
    </citation>
    <scope>NUCLEOTIDE SEQUENCE [LARGE SCALE GENOMIC DNA]</scope>
    <source>
        <strain>PCC 8801 / RF-1</strain>
    </source>
</reference>